<gene>
    <name evidence="8" type="primary">dar1</name>
    <name evidence="8" type="ORF">CG12029</name>
</gene>
<reference evidence="9" key="1">
    <citation type="journal article" date="2000" name="Science">
        <title>The genome sequence of Drosophila melanogaster.</title>
        <authorList>
            <person name="Adams M.D."/>
            <person name="Celniker S.E."/>
            <person name="Holt R.A."/>
            <person name="Evans C.A."/>
            <person name="Gocayne J.D."/>
            <person name="Amanatides P.G."/>
            <person name="Scherer S.E."/>
            <person name="Li P.W."/>
            <person name="Hoskins R.A."/>
            <person name="Galle R.F."/>
            <person name="George R.A."/>
            <person name="Lewis S.E."/>
            <person name="Richards S."/>
            <person name="Ashburner M."/>
            <person name="Henderson S.N."/>
            <person name="Sutton G.G."/>
            <person name="Wortman J.R."/>
            <person name="Yandell M.D."/>
            <person name="Zhang Q."/>
            <person name="Chen L.X."/>
            <person name="Brandon R.C."/>
            <person name="Rogers Y.-H.C."/>
            <person name="Blazej R.G."/>
            <person name="Champe M."/>
            <person name="Pfeiffer B.D."/>
            <person name="Wan K.H."/>
            <person name="Doyle C."/>
            <person name="Baxter E.G."/>
            <person name="Helt G."/>
            <person name="Nelson C.R."/>
            <person name="Miklos G.L.G."/>
            <person name="Abril J.F."/>
            <person name="Agbayani A."/>
            <person name="An H.-J."/>
            <person name="Andrews-Pfannkoch C."/>
            <person name="Baldwin D."/>
            <person name="Ballew R.M."/>
            <person name="Basu A."/>
            <person name="Baxendale J."/>
            <person name="Bayraktaroglu L."/>
            <person name="Beasley E.M."/>
            <person name="Beeson K.Y."/>
            <person name="Benos P.V."/>
            <person name="Berman B.P."/>
            <person name="Bhandari D."/>
            <person name="Bolshakov S."/>
            <person name="Borkova D."/>
            <person name="Botchan M.R."/>
            <person name="Bouck J."/>
            <person name="Brokstein P."/>
            <person name="Brottier P."/>
            <person name="Burtis K.C."/>
            <person name="Busam D.A."/>
            <person name="Butler H."/>
            <person name="Cadieu E."/>
            <person name="Center A."/>
            <person name="Chandra I."/>
            <person name="Cherry J.M."/>
            <person name="Cawley S."/>
            <person name="Dahlke C."/>
            <person name="Davenport L.B."/>
            <person name="Davies P."/>
            <person name="de Pablos B."/>
            <person name="Delcher A."/>
            <person name="Deng Z."/>
            <person name="Mays A.D."/>
            <person name="Dew I."/>
            <person name="Dietz S.M."/>
            <person name="Dodson K."/>
            <person name="Doup L.E."/>
            <person name="Downes M."/>
            <person name="Dugan-Rocha S."/>
            <person name="Dunkov B.C."/>
            <person name="Dunn P."/>
            <person name="Durbin K.J."/>
            <person name="Evangelista C.C."/>
            <person name="Ferraz C."/>
            <person name="Ferriera S."/>
            <person name="Fleischmann W."/>
            <person name="Fosler C."/>
            <person name="Gabrielian A.E."/>
            <person name="Garg N.S."/>
            <person name="Gelbart W.M."/>
            <person name="Glasser K."/>
            <person name="Glodek A."/>
            <person name="Gong F."/>
            <person name="Gorrell J.H."/>
            <person name="Gu Z."/>
            <person name="Guan P."/>
            <person name="Harris M."/>
            <person name="Harris N.L."/>
            <person name="Harvey D.A."/>
            <person name="Heiman T.J."/>
            <person name="Hernandez J.R."/>
            <person name="Houck J."/>
            <person name="Hostin D."/>
            <person name="Houston K.A."/>
            <person name="Howland T.J."/>
            <person name="Wei M.-H."/>
            <person name="Ibegwam C."/>
            <person name="Jalali M."/>
            <person name="Kalush F."/>
            <person name="Karpen G.H."/>
            <person name="Ke Z."/>
            <person name="Kennison J.A."/>
            <person name="Ketchum K.A."/>
            <person name="Kimmel B.E."/>
            <person name="Kodira C.D."/>
            <person name="Kraft C.L."/>
            <person name="Kravitz S."/>
            <person name="Kulp D."/>
            <person name="Lai Z."/>
            <person name="Lasko P."/>
            <person name="Lei Y."/>
            <person name="Levitsky A.A."/>
            <person name="Li J.H."/>
            <person name="Li Z."/>
            <person name="Liang Y."/>
            <person name="Lin X."/>
            <person name="Liu X."/>
            <person name="Mattei B."/>
            <person name="McIntosh T.C."/>
            <person name="McLeod M.P."/>
            <person name="McPherson D."/>
            <person name="Merkulov G."/>
            <person name="Milshina N.V."/>
            <person name="Mobarry C."/>
            <person name="Morris J."/>
            <person name="Moshrefi A."/>
            <person name="Mount S.M."/>
            <person name="Moy M."/>
            <person name="Murphy B."/>
            <person name="Murphy L."/>
            <person name="Muzny D.M."/>
            <person name="Nelson D.L."/>
            <person name="Nelson D.R."/>
            <person name="Nelson K.A."/>
            <person name="Nixon K."/>
            <person name="Nusskern D.R."/>
            <person name="Pacleb J.M."/>
            <person name="Palazzolo M."/>
            <person name="Pittman G.S."/>
            <person name="Pan S."/>
            <person name="Pollard J."/>
            <person name="Puri V."/>
            <person name="Reese M.G."/>
            <person name="Reinert K."/>
            <person name="Remington K."/>
            <person name="Saunders R.D.C."/>
            <person name="Scheeler F."/>
            <person name="Shen H."/>
            <person name="Shue B.C."/>
            <person name="Siden-Kiamos I."/>
            <person name="Simpson M."/>
            <person name="Skupski M.P."/>
            <person name="Smith T.J."/>
            <person name="Spier E."/>
            <person name="Spradling A.C."/>
            <person name="Stapleton M."/>
            <person name="Strong R."/>
            <person name="Sun E."/>
            <person name="Svirskas R."/>
            <person name="Tector C."/>
            <person name="Turner R."/>
            <person name="Venter E."/>
            <person name="Wang A.H."/>
            <person name="Wang X."/>
            <person name="Wang Z.-Y."/>
            <person name="Wassarman D.A."/>
            <person name="Weinstock G.M."/>
            <person name="Weissenbach J."/>
            <person name="Williams S.M."/>
            <person name="Woodage T."/>
            <person name="Worley K.C."/>
            <person name="Wu D."/>
            <person name="Yang S."/>
            <person name="Yao Q.A."/>
            <person name="Ye J."/>
            <person name="Yeh R.-F."/>
            <person name="Zaveri J.S."/>
            <person name="Zhan M."/>
            <person name="Zhang G."/>
            <person name="Zhao Q."/>
            <person name="Zheng L."/>
            <person name="Zheng X.H."/>
            <person name="Zhong F.N."/>
            <person name="Zhong W."/>
            <person name="Zhou X."/>
            <person name="Zhu S.C."/>
            <person name="Zhu X."/>
            <person name="Smith H.O."/>
            <person name="Gibbs R.A."/>
            <person name="Myers E.W."/>
            <person name="Rubin G.M."/>
            <person name="Venter J.C."/>
        </authorList>
    </citation>
    <scope>NUCLEOTIDE SEQUENCE [LARGE SCALE GENOMIC DNA]</scope>
    <source>
        <strain evidence="9">Berkeley</strain>
    </source>
</reference>
<reference evidence="9" key="2">
    <citation type="journal article" date="2002" name="Genome Biol.">
        <title>Annotation of the Drosophila melanogaster euchromatic genome: a systematic review.</title>
        <authorList>
            <person name="Misra S."/>
            <person name="Crosby M.A."/>
            <person name="Mungall C.J."/>
            <person name="Matthews B.B."/>
            <person name="Campbell K.S."/>
            <person name="Hradecky P."/>
            <person name="Huang Y."/>
            <person name="Kaminker J.S."/>
            <person name="Millburn G.H."/>
            <person name="Prochnik S.E."/>
            <person name="Smith C.D."/>
            <person name="Tupy J.L."/>
            <person name="Whitfield E.J."/>
            <person name="Bayraktaroglu L."/>
            <person name="Berman B.P."/>
            <person name="Bettencourt B.R."/>
            <person name="Celniker S.E."/>
            <person name="de Grey A.D.N.J."/>
            <person name="Drysdale R.A."/>
            <person name="Harris N.L."/>
            <person name="Richter J."/>
            <person name="Russo S."/>
            <person name="Schroeder A.J."/>
            <person name="Shu S.Q."/>
            <person name="Stapleton M."/>
            <person name="Yamada C."/>
            <person name="Ashburner M."/>
            <person name="Gelbart W.M."/>
            <person name="Rubin G.M."/>
            <person name="Lewis S.E."/>
        </authorList>
    </citation>
    <scope>GENOME REANNOTATION</scope>
    <source>
        <strain evidence="9">Berkeley</strain>
    </source>
</reference>
<reference evidence="7" key="3">
    <citation type="submission" date="2007-04" db="EMBL/GenBank/DDBJ databases">
        <authorList>
            <person name="Stapleton M."/>
            <person name="Carlson J."/>
            <person name="Frise E."/>
            <person name="Kapadia B."/>
            <person name="Park S."/>
            <person name="Wan K."/>
            <person name="Yu C."/>
            <person name="Celniker S."/>
        </authorList>
    </citation>
    <scope>NUCLEOTIDE SEQUENCE [LARGE SCALE MRNA]</scope>
    <source>
        <strain evidence="7">Berkeley</strain>
    </source>
</reference>
<reference evidence="5" key="4">
    <citation type="journal article" date="2011" name="J. Neurosci.">
        <title>Differential regulation of dendritic and axonal development by the novel Krueppel-like factor Dar1.</title>
        <authorList>
            <person name="Ye B."/>
            <person name="Kim J.H."/>
            <person name="Yang L."/>
            <person name="McLachlan I."/>
            <person name="Younger S."/>
            <person name="Jan L.Y."/>
            <person name="Jan Y.N."/>
        </authorList>
    </citation>
    <scope>FUNCTION</scope>
    <scope>SUBCELLULAR LOCATION</scope>
    <scope>TISSUE SPECIFICITY</scope>
    <scope>DISRUPTION PHENOTYPE</scope>
</reference>
<reference evidence="5" key="5">
    <citation type="journal article" date="2015" name="J. Neurosci.">
        <title>The Krueppel-Like factor Dar1 determines multipolar neuron morphology.</title>
        <authorList>
            <person name="Wang X."/>
            <person name="Zhang M.W."/>
            <person name="Kim J.H."/>
            <person name="Macara A.M."/>
            <person name="Sterne G."/>
            <person name="Yang T."/>
            <person name="Ye B."/>
        </authorList>
    </citation>
    <scope>FUNCTION</scope>
    <scope>TISSUE SPECIFICITY</scope>
    <scope>DISRUPTION PHENOTYPE</scope>
</reference>
<name>DAR1_DROME</name>
<organism evidence="9">
    <name type="scientific">Drosophila melanogaster</name>
    <name type="common">Fruit fly</name>
    <dbReference type="NCBI Taxonomy" id="7227"/>
    <lineage>
        <taxon>Eukaryota</taxon>
        <taxon>Metazoa</taxon>
        <taxon>Ecdysozoa</taxon>
        <taxon>Arthropoda</taxon>
        <taxon>Hexapoda</taxon>
        <taxon>Insecta</taxon>
        <taxon>Pterygota</taxon>
        <taxon>Neoptera</taxon>
        <taxon>Endopterygota</taxon>
        <taxon>Diptera</taxon>
        <taxon>Brachycera</taxon>
        <taxon>Muscomorpha</taxon>
        <taxon>Ephydroidea</taxon>
        <taxon>Drosophilidae</taxon>
        <taxon>Drosophila</taxon>
        <taxon>Sophophora</taxon>
    </lineage>
</organism>
<dbReference type="EMBL" id="AE014296">
    <property type="protein sequence ID" value="AAF47785.2"/>
    <property type="molecule type" value="Genomic_DNA"/>
</dbReference>
<dbReference type="EMBL" id="BT022200">
    <property type="protein sequence ID" value="AAY51594.1"/>
    <property type="molecule type" value="mRNA"/>
</dbReference>
<dbReference type="RefSeq" id="NP_001097493.1">
    <property type="nucleotide sequence ID" value="NM_001104023.2"/>
</dbReference>
<dbReference type="SMR" id="Q9VZN4"/>
<dbReference type="FunCoup" id="Q9VZN4">
    <property type="interactions" value="116"/>
</dbReference>
<dbReference type="IntAct" id="Q9VZN4">
    <property type="interactions" value="9"/>
</dbReference>
<dbReference type="STRING" id="7227.FBpp0112047"/>
<dbReference type="GlyGen" id="Q9VZN4">
    <property type="glycosylation" value="3 sites"/>
</dbReference>
<dbReference type="PaxDb" id="7227-FBpp0112047"/>
<dbReference type="DNASU" id="38436"/>
<dbReference type="EnsemblMetazoa" id="FBtr0113134">
    <property type="protein sequence ID" value="FBpp0112047"/>
    <property type="gene ID" value="FBgn0263239"/>
</dbReference>
<dbReference type="GeneID" id="38436"/>
<dbReference type="KEGG" id="dme:Dmel_CG12029"/>
<dbReference type="UCSC" id="CG12029-RB">
    <property type="organism name" value="d. melanogaster"/>
</dbReference>
<dbReference type="AGR" id="FB:FBgn0263239"/>
<dbReference type="CTD" id="38436"/>
<dbReference type="FlyBase" id="FBgn0263239">
    <property type="gene designation" value="dar1"/>
</dbReference>
<dbReference type="VEuPathDB" id="VectorBase:FBgn0263239"/>
<dbReference type="eggNOG" id="KOG1721">
    <property type="taxonomic scope" value="Eukaryota"/>
</dbReference>
<dbReference type="GeneTree" id="ENSGT00940000164016"/>
<dbReference type="HOGENOM" id="CLU_014863_1_0_1"/>
<dbReference type="InParanoid" id="Q9VZN4"/>
<dbReference type="OMA" id="SYGYSWH"/>
<dbReference type="OrthoDB" id="4748970at2759"/>
<dbReference type="PhylomeDB" id="Q9VZN4"/>
<dbReference type="SignaLink" id="Q9VZN4"/>
<dbReference type="BioGRID-ORCS" id="38436">
    <property type="hits" value="0 hits in 3 CRISPR screens"/>
</dbReference>
<dbReference type="ChiTaRS" id="dar1">
    <property type="organism name" value="fly"/>
</dbReference>
<dbReference type="GenomeRNAi" id="38436"/>
<dbReference type="PRO" id="PR:Q9VZN4"/>
<dbReference type="Proteomes" id="UP000000803">
    <property type="component" value="Chromosome 3L"/>
</dbReference>
<dbReference type="Bgee" id="FBgn0263239">
    <property type="expression patterns" value="Expressed in adult tracheocyte (Drosophila) in insect leg and 44 other cell types or tissues"/>
</dbReference>
<dbReference type="GO" id="GO:0005634">
    <property type="term" value="C:nucleus"/>
    <property type="evidence" value="ECO:0000314"/>
    <property type="project" value="FlyBase"/>
</dbReference>
<dbReference type="GO" id="GO:0003700">
    <property type="term" value="F:DNA-binding transcription factor activity"/>
    <property type="evidence" value="ECO:0000250"/>
    <property type="project" value="FlyBase"/>
</dbReference>
<dbReference type="GO" id="GO:0000981">
    <property type="term" value="F:DNA-binding transcription factor activity, RNA polymerase II-specific"/>
    <property type="evidence" value="ECO:0000318"/>
    <property type="project" value="GO_Central"/>
</dbReference>
<dbReference type="GO" id="GO:0000978">
    <property type="term" value="F:RNA polymerase II cis-regulatory region sequence-specific DNA binding"/>
    <property type="evidence" value="ECO:0000318"/>
    <property type="project" value="GO_Central"/>
</dbReference>
<dbReference type="GO" id="GO:0043565">
    <property type="term" value="F:sequence-specific DNA binding"/>
    <property type="evidence" value="ECO:0000314"/>
    <property type="project" value="FlyBase"/>
</dbReference>
<dbReference type="GO" id="GO:0008270">
    <property type="term" value="F:zinc ion binding"/>
    <property type="evidence" value="ECO:0007669"/>
    <property type="project" value="UniProtKB-KW"/>
</dbReference>
<dbReference type="GO" id="GO:0007026">
    <property type="term" value="P:negative regulation of microtubule depolymerization"/>
    <property type="evidence" value="ECO:0000315"/>
    <property type="project" value="FlyBase"/>
</dbReference>
<dbReference type="GO" id="GO:0000122">
    <property type="term" value="P:negative regulation of transcription by RNA polymerase II"/>
    <property type="evidence" value="ECO:0000315"/>
    <property type="project" value="FlyBase"/>
</dbReference>
<dbReference type="GO" id="GO:0007399">
    <property type="term" value="P:nervous system development"/>
    <property type="evidence" value="ECO:0007669"/>
    <property type="project" value="UniProtKB-KW"/>
</dbReference>
<dbReference type="GO" id="GO:1903861">
    <property type="term" value="P:positive regulation of dendrite extension"/>
    <property type="evidence" value="ECO:0000315"/>
    <property type="project" value="FlyBase"/>
</dbReference>
<dbReference type="GO" id="GO:0050775">
    <property type="term" value="P:positive regulation of dendrite morphogenesis"/>
    <property type="evidence" value="ECO:0000315"/>
    <property type="project" value="FlyBase"/>
</dbReference>
<dbReference type="GO" id="GO:0045944">
    <property type="term" value="P:positive regulation of transcription by RNA polymerase II"/>
    <property type="evidence" value="ECO:0000315"/>
    <property type="project" value="FlyBase"/>
</dbReference>
<dbReference type="GO" id="GO:0006357">
    <property type="term" value="P:regulation of transcription by RNA polymerase II"/>
    <property type="evidence" value="ECO:0000250"/>
    <property type="project" value="FlyBase"/>
</dbReference>
<dbReference type="FunFam" id="3.30.160.60:FF:000021">
    <property type="entry name" value="Basic krueppel-like factor 3"/>
    <property type="match status" value="1"/>
</dbReference>
<dbReference type="FunFam" id="3.30.160.60:FF:002052">
    <property type="entry name" value="Krueppel factor 7"/>
    <property type="match status" value="1"/>
</dbReference>
<dbReference type="FunFam" id="3.30.160.60:FF:000018">
    <property type="entry name" value="Krueppel-like factor 15"/>
    <property type="match status" value="1"/>
</dbReference>
<dbReference type="Gene3D" id="3.30.160.60">
    <property type="entry name" value="Classic Zinc Finger"/>
    <property type="match status" value="3"/>
</dbReference>
<dbReference type="InterPro" id="IPR036236">
    <property type="entry name" value="Znf_C2H2_sf"/>
</dbReference>
<dbReference type="InterPro" id="IPR013087">
    <property type="entry name" value="Znf_C2H2_type"/>
</dbReference>
<dbReference type="PANTHER" id="PTHR23235:SF166">
    <property type="entry name" value="DENDRITIC ARBOR REDUCTION PROTEIN 1"/>
    <property type="match status" value="1"/>
</dbReference>
<dbReference type="PANTHER" id="PTHR23235">
    <property type="entry name" value="KRUEPPEL-LIKE TRANSCRIPTION FACTOR"/>
    <property type="match status" value="1"/>
</dbReference>
<dbReference type="Pfam" id="PF00096">
    <property type="entry name" value="zf-C2H2"/>
    <property type="match status" value="3"/>
</dbReference>
<dbReference type="SMART" id="SM00355">
    <property type="entry name" value="ZnF_C2H2"/>
    <property type="match status" value="3"/>
</dbReference>
<dbReference type="SUPFAM" id="SSF57667">
    <property type="entry name" value="beta-beta-alpha zinc fingers"/>
    <property type="match status" value="2"/>
</dbReference>
<dbReference type="PROSITE" id="PS00028">
    <property type="entry name" value="ZINC_FINGER_C2H2_1"/>
    <property type="match status" value="3"/>
</dbReference>
<dbReference type="PROSITE" id="PS50157">
    <property type="entry name" value="ZINC_FINGER_C2H2_2"/>
    <property type="match status" value="3"/>
</dbReference>
<keyword id="KW-0479">Metal-binding</keyword>
<keyword id="KW-0524">Neurogenesis</keyword>
<keyword id="KW-0539">Nucleus</keyword>
<keyword id="KW-1185">Reference proteome</keyword>
<keyword id="KW-0677">Repeat</keyword>
<keyword id="KW-0804">Transcription</keyword>
<keyword id="KW-0805">Transcription regulation</keyword>
<keyword id="KW-0862">Zinc</keyword>
<keyword id="KW-0863">Zinc-finger</keyword>
<protein>
    <recommendedName>
        <fullName evidence="6">Dendritic arbor reduction protein 1</fullName>
    </recommendedName>
</protein>
<accession>Q9VZN4</accession>
<accession>Q4V6V6</accession>
<proteinExistence type="evidence at transcript level"/>
<comment type="function">
    <text evidence="3 4">Transcriptional regulator which promotes dendrite growth by suppressing, either directly or indirectly, the expression of the microtubule-severing protein spas (PubMed:21368042). Determines multipolar neuron morphology in postmitotic neurons by positively regulating the expression of genes involved in nuclear positioning including several dynein genes and the nuclear migration protein nudC (PubMed:26490864).</text>
</comment>
<comment type="subcellular location">
    <subcellularLocation>
        <location evidence="3">Nucleus</location>
    </subcellularLocation>
</comment>
<comment type="tissue specificity">
    <text evidence="3 4">Highly enriched in the peripheral nervous system but is absent from the central nervous system (PubMed:21368042). Expressed in neurons with more than one dendrite including da neurons, bd neurons and the dmd1 neuron but undetectable in neurons with single dendrites such as external sensory organ neurons and chodonotal neurons (PubMed:26490864).</text>
</comment>
<comment type="disruption phenotype">
    <text evidence="3 4">Severely reduced growth of microtubule-based dendritic branches and elevated levels of microtubule-severing protein spas (PubMed:21368042). Gradual conversion of multipolar neurons into the bipolar or unipolar morphology (PubMed:26490864).</text>
</comment>
<comment type="similarity">
    <text evidence="5">Belongs to the krueppel C2H2-type zinc-finger protein family.</text>
</comment>
<evidence type="ECO:0000255" key="1">
    <source>
        <dbReference type="PROSITE-ProRule" id="PRU00042"/>
    </source>
</evidence>
<evidence type="ECO:0000256" key="2">
    <source>
        <dbReference type="SAM" id="MobiDB-lite"/>
    </source>
</evidence>
<evidence type="ECO:0000269" key="3">
    <source>
    </source>
</evidence>
<evidence type="ECO:0000269" key="4">
    <source>
    </source>
</evidence>
<evidence type="ECO:0000305" key="5"/>
<evidence type="ECO:0000312" key="6">
    <source>
        <dbReference type="EMBL" id="AAF47785.2"/>
    </source>
</evidence>
<evidence type="ECO:0000312" key="7">
    <source>
        <dbReference type="EMBL" id="AAY51594.1"/>
    </source>
</evidence>
<evidence type="ECO:0000312" key="8">
    <source>
        <dbReference type="FlyBase" id="FBgn0263239"/>
    </source>
</evidence>
<evidence type="ECO:0000312" key="9">
    <source>
        <dbReference type="Proteomes" id="UP000000803"/>
    </source>
</evidence>
<feature type="chain" id="PRO_0000436601" description="Dendritic arbor reduction protein 1">
    <location>
        <begin position="1"/>
        <end position="751"/>
    </location>
</feature>
<feature type="zinc finger region" description="C2H2-type 1" evidence="1">
    <location>
        <begin position="664"/>
        <end position="688"/>
    </location>
</feature>
<feature type="zinc finger region" description="C2H2-type 2" evidence="1">
    <location>
        <begin position="694"/>
        <end position="718"/>
    </location>
</feature>
<feature type="zinc finger region" description="C2H2-type 3" evidence="1">
    <location>
        <begin position="724"/>
        <end position="746"/>
    </location>
</feature>
<feature type="region of interest" description="Disordered" evidence="2">
    <location>
        <begin position="57"/>
        <end position="167"/>
    </location>
</feature>
<feature type="region of interest" description="Disordered" evidence="2">
    <location>
        <begin position="248"/>
        <end position="275"/>
    </location>
</feature>
<feature type="region of interest" description="Disordered" evidence="2">
    <location>
        <begin position="304"/>
        <end position="351"/>
    </location>
</feature>
<feature type="region of interest" description="Disordered" evidence="2">
    <location>
        <begin position="374"/>
        <end position="410"/>
    </location>
</feature>
<feature type="region of interest" description="Disordered" evidence="2">
    <location>
        <begin position="458"/>
        <end position="578"/>
    </location>
</feature>
<feature type="region of interest" description="Disordered" evidence="2">
    <location>
        <begin position="594"/>
        <end position="639"/>
    </location>
</feature>
<feature type="compositionally biased region" description="Low complexity" evidence="2">
    <location>
        <begin position="57"/>
        <end position="89"/>
    </location>
</feature>
<feature type="compositionally biased region" description="Basic residues" evidence="2">
    <location>
        <begin position="95"/>
        <end position="125"/>
    </location>
</feature>
<feature type="compositionally biased region" description="Polar residues" evidence="2">
    <location>
        <begin position="153"/>
        <end position="167"/>
    </location>
</feature>
<feature type="compositionally biased region" description="Low complexity" evidence="2">
    <location>
        <begin position="251"/>
        <end position="267"/>
    </location>
</feature>
<feature type="compositionally biased region" description="Low complexity" evidence="2">
    <location>
        <begin position="309"/>
        <end position="351"/>
    </location>
</feature>
<feature type="compositionally biased region" description="Low complexity" evidence="2">
    <location>
        <begin position="374"/>
        <end position="393"/>
    </location>
</feature>
<feature type="compositionally biased region" description="Polar residues" evidence="2">
    <location>
        <begin position="400"/>
        <end position="410"/>
    </location>
</feature>
<feature type="compositionally biased region" description="Low complexity" evidence="2">
    <location>
        <begin position="458"/>
        <end position="513"/>
    </location>
</feature>
<feature type="compositionally biased region" description="Low complexity" evidence="2">
    <location>
        <begin position="527"/>
        <end position="548"/>
    </location>
</feature>
<feature type="compositionally biased region" description="Low complexity" evidence="2">
    <location>
        <begin position="594"/>
        <end position="610"/>
    </location>
</feature>
<sequence length="751" mass="82348">MHTDIIIGDQFAANNNYWVMQSPELDYRHELMGRLHKIEPADVELEVLAAAAAAANNNNNTSSNNNHSSNSSSNNSNGSQTPNGNNNSSLATGGHQHHQFHHHLHHHHSHQHHHQHHHLHQHHSHSLQSGESGASEAWPHLPAPSYASDVPHAQQQQLQPAGSPNSNSNGAYGCAPLYDGAPYEVALGYGGAVVASTGGATSSDKEYLYETKNKEALYADPLDDPYQRPVLWDDITTSIQNIDPENALMLSSSGSSNNNGSSNSSSNTGESATSQLPQVKMEAIDESLLETFSTPLLSPLEIKTEKQQRQQQHQHQQQQQQQQQQQQQHQQQHQQQYQQQHYQQHYQQQHLYQHHPSLALPGLPPAVDVVELQLQQQHQQQQHLQHNNSSSSSPKLATPGDNSGNTSSYQQQYASQLVSGSGGGYLNGSSSNSYGYSWHSSQSFHTKYQIHPPSAAASATASATATPTAQLGAQQQQQQQQQQQLQQLCPPAAPSTPSTSSSSISSSSASSASRHMFVPPLTPPSSDPGSPGSSMVAAAAAAAAQRRTTPPPPYQQGHVMGLINPPPTLQLLGGAATGSNNSCTTTLTTLTPASAIQQQQQQPQQQQVPQQQPPPTPRSSGGGRRGRHSHHQPGTAAHIASLMSVRTVRYNRRNNPELEKRRIHHCDFVGCSKVYTKSSHLKAHQRIHTGEKPYTCQWPECEWRFARSDELTRHYRKHTGAKPFKCIVCERSFARSDHLALHMKRHLPKNK</sequence>